<organism>
    <name type="scientific">Staphylococcus aureus (strain JH1)</name>
    <dbReference type="NCBI Taxonomy" id="359787"/>
    <lineage>
        <taxon>Bacteria</taxon>
        <taxon>Bacillati</taxon>
        <taxon>Bacillota</taxon>
        <taxon>Bacilli</taxon>
        <taxon>Bacillales</taxon>
        <taxon>Staphylococcaceae</taxon>
        <taxon>Staphylococcus</taxon>
    </lineage>
</organism>
<evidence type="ECO:0000255" key="1">
    <source>
        <dbReference type="HAMAP-Rule" id="MF_00173"/>
    </source>
</evidence>
<reference key="1">
    <citation type="submission" date="2007-06" db="EMBL/GenBank/DDBJ databases">
        <title>Complete sequence of chromosome of Staphylococcus aureus subsp. aureus JH1.</title>
        <authorList>
            <consortium name="US DOE Joint Genome Institute"/>
            <person name="Copeland A."/>
            <person name="Lucas S."/>
            <person name="Lapidus A."/>
            <person name="Barry K."/>
            <person name="Detter J.C."/>
            <person name="Glavina del Rio T."/>
            <person name="Hammon N."/>
            <person name="Israni S."/>
            <person name="Dalin E."/>
            <person name="Tice H."/>
            <person name="Pitluck S."/>
            <person name="Chain P."/>
            <person name="Malfatti S."/>
            <person name="Shin M."/>
            <person name="Vergez L."/>
            <person name="Schmutz J."/>
            <person name="Larimer F."/>
            <person name="Land M."/>
            <person name="Hauser L."/>
            <person name="Kyrpides N."/>
            <person name="Ivanova N."/>
            <person name="Tomasz A."/>
            <person name="Richardson P."/>
        </authorList>
    </citation>
    <scope>NUCLEOTIDE SEQUENCE [LARGE SCALE GENOMIC DNA]</scope>
    <source>
        <strain>JH1</strain>
    </source>
</reference>
<accession>A6U1Z2</accession>
<keyword id="KW-0028">Amino-acid biosynthesis</keyword>
<keyword id="KW-0055">Arginine biosynthesis</keyword>
<keyword id="KW-0963">Cytoplasm</keyword>
<keyword id="KW-0238">DNA-binding</keyword>
<keyword id="KW-0678">Repressor</keyword>
<keyword id="KW-0804">Transcription</keyword>
<keyword id="KW-0805">Transcription regulation</keyword>
<proteinExistence type="inferred from homology"/>
<name>ARGR_STAA2</name>
<protein>
    <recommendedName>
        <fullName evidence="1">Arginine repressor</fullName>
    </recommendedName>
</protein>
<dbReference type="EMBL" id="CP000736">
    <property type="protein sequence ID" value="ABR52460.1"/>
    <property type="molecule type" value="Genomic_DNA"/>
</dbReference>
<dbReference type="SMR" id="A6U1Z2"/>
<dbReference type="KEGG" id="sah:SaurJH1_1612"/>
<dbReference type="HOGENOM" id="CLU_097103_3_0_9"/>
<dbReference type="UniPathway" id="UPA00068"/>
<dbReference type="GO" id="GO:0005737">
    <property type="term" value="C:cytoplasm"/>
    <property type="evidence" value="ECO:0007669"/>
    <property type="project" value="UniProtKB-SubCell"/>
</dbReference>
<dbReference type="GO" id="GO:0034618">
    <property type="term" value="F:arginine binding"/>
    <property type="evidence" value="ECO:0007669"/>
    <property type="project" value="InterPro"/>
</dbReference>
<dbReference type="GO" id="GO:0003677">
    <property type="term" value="F:DNA binding"/>
    <property type="evidence" value="ECO:0007669"/>
    <property type="project" value="UniProtKB-KW"/>
</dbReference>
<dbReference type="GO" id="GO:0003700">
    <property type="term" value="F:DNA-binding transcription factor activity"/>
    <property type="evidence" value="ECO:0007669"/>
    <property type="project" value="UniProtKB-UniRule"/>
</dbReference>
<dbReference type="GO" id="GO:0006526">
    <property type="term" value="P:L-arginine biosynthetic process"/>
    <property type="evidence" value="ECO:0007669"/>
    <property type="project" value="UniProtKB-UniPathway"/>
</dbReference>
<dbReference type="GO" id="GO:0051259">
    <property type="term" value="P:protein complex oligomerization"/>
    <property type="evidence" value="ECO:0007669"/>
    <property type="project" value="InterPro"/>
</dbReference>
<dbReference type="GO" id="GO:1900079">
    <property type="term" value="P:regulation of arginine biosynthetic process"/>
    <property type="evidence" value="ECO:0007669"/>
    <property type="project" value="UniProtKB-UniRule"/>
</dbReference>
<dbReference type="Gene3D" id="3.30.1360.40">
    <property type="match status" value="1"/>
</dbReference>
<dbReference type="Gene3D" id="1.10.10.10">
    <property type="entry name" value="Winged helix-like DNA-binding domain superfamily/Winged helix DNA-binding domain"/>
    <property type="match status" value="1"/>
</dbReference>
<dbReference type="HAMAP" id="MF_00173">
    <property type="entry name" value="Arg_repressor"/>
    <property type="match status" value="1"/>
</dbReference>
<dbReference type="InterPro" id="IPR001669">
    <property type="entry name" value="Arg_repress"/>
</dbReference>
<dbReference type="InterPro" id="IPR020899">
    <property type="entry name" value="Arg_repress_C"/>
</dbReference>
<dbReference type="InterPro" id="IPR036251">
    <property type="entry name" value="Arg_repress_C_sf"/>
</dbReference>
<dbReference type="InterPro" id="IPR020900">
    <property type="entry name" value="Arg_repress_DNA-bd"/>
</dbReference>
<dbReference type="InterPro" id="IPR036388">
    <property type="entry name" value="WH-like_DNA-bd_sf"/>
</dbReference>
<dbReference type="InterPro" id="IPR036390">
    <property type="entry name" value="WH_DNA-bd_sf"/>
</dbReference>
<dbReference type="NCBIfam" id="TIGR01529">
    <property type="entry name" value="argR_whole"/>
    <property type="match status" value="1"/>
</dbReference>
<dbReference type="NCBIfam" id="NF003281">
    <property type="entry name" value="PRK04280.1"/>
    <property type="match status" value="1"/>
</dbReference>
<dbReference type="PANTHER" id="PTHR34471">
    <property type="entry name" value="ARGININE REPRESSOR"/>
    <property type="match status" value="1"/>
</dbReference>
<dbReference type="PANTHER" id="PTHR34471:SF1">
    <property type="entry name" value="ARGININE REPRESSOR"/>
    <property type="match status" value="1"/>
</dbReference>
<dbReference type="Pfam" id="PF01316">
    <property type="entry name" value="Arg_repressor"/>
    <property type="match status" value="1"/>
</dbReference>
<dbReference type="Pfam" id="PF02863">
    <property type="entry name" value="Arg_repressor_C"/>
    <property type="match status" value="1"/>
</dbReference>
<dbReference type="PRINTS" id="PR01467">
    <property type="entry name" value="ARGREPRESSOR"/>
</dbReference>
<dbReference type="SUPFAM" id="SSF55252">
    <property type="entry name" value="C-terminal domain of arginine repressor"/>
    <property type="match status" value="1"/>
</dbReference>
<dbReference type="SUPFAM" id="SSF46785">
    <property type="entry name" value="Winged helix' DNA-binding domain"/>
    <property type="match status" value="1"/>
</dbReference>
<feature type="chain" id="PRO_1000077136" description="Arginine repressor">
    <location>
        <begin position="1"/>
        <end position="150"/>
    </location>
</feature>
<comment type="function">
    <text evidence="1">Regulates arginine biosynthesis genes.</text>
</comment>
<comment type="pathway">
    <text>Amino-acid biosynthesis; L-arginine biosynthesis [regulation].</text>
</comment>
<comment type="subcellular location">
    <subcellularLocation>
        <location evidence="1">Cytoplasm</location>
    </subcellularLocation>
</comment>
<comment type="similarity">
    <text evidence="1">Belongs to the ArgR family.</text>
</comment>
<sequence length="150" mass="17098">MPKKSVRHIKIREIISNEQIETQDELVKRLNDYDLNVTQATVSRDIKELQLIKVPIPSGQYVYSLPNDRKFHPLEKLGRYLMDSFVNIDGTDNLLVLKTLPGNAQSIGAILDQINWEEVLGTICGDDTCLIICRSKEASDEIKSRIFNLL</sequence>
<gene>
    <name evidence="1" type="primary">argR</name>
    <name type="ordered locus">SaurJH1_1612</name>
</gene>